<sequence length="210" mass="23983">MGLKPLVIGITGGSGSGKTTVSRELVRRLTEDGSSAILLQQDSYYKDQSDKPMSERVKTNYDHPDSFETDLFVSDLRRLLRHEAISKPIYDYPNHTRAKEVEPVEPADVIIVDGVLLFNDSRVRDLLDMKIFVDTDDDIRFLRRLERDIDERGRTVRGVIDQYLATVKPMYHQFVEPTKRYANIIVPEGGENLVAIDMLTNQAKAMLKQN</sequence>
<accession>B1MXP1</accession>
<protein>
    <recommendedName>
        <fullName evidence="1">Uridine kinase</fullName>
        <ecNumber evidence="1">2.7.1.48</ecNumber>
    </recommendedName>
    <alternativeName>
        <fullName evidence="1">Cytidine monophosphokinase</fullName>
    </alternativeName>
    <alternativeName>
        <fullName evidence="1">Uridine monophosphokinase</fullName>
    </alternativeName>
</protein>
<comment type="catalytic activity">
    <reaction evidence="1">
        <text>uridine + ATP = UMP + ADP + H(+)</text>
        <dbReference type="Rhea" id="RHEA:16825"/>
        <dbReference type="ChEBI" id="CHEBI:15378"/>
        <dbReference type="ChEBI" id="CHEBI:16704"/>
        <dbReference type="ChEBI" id="CHEBI:30616"/>
        <dbReference type="ChEBI" id="CHEBI:57865"/>
        <dbReference type="ChEBI" id="CHEBI:456216"/>
        <dbReference type="EC" id="2.7.1.48"/>
    </reaction>
</comment>
<comment type="catalytic activity">
    <reaction evidence="1">
        <text>cytidine + ATP = CMP + ADP + H(+)</text>
        <dbReference type="Rhea" id="RHEA:24674"/>
        <dbReference type="ChEBI" id="CHEBI:15378"/>
        <dbReference type="ChEBI" id="CHEBI:17562"/>
        <dbReference type="ChEBI" id="CHEBI:30616"/>
        <dbReference type="ChEBI" id="CHEBI:60377"/>
        <dbReference type="ChEBI" id="CHEBI:456216"/>
        <dbReference type="EC" id="2.7.1.48"/>
    </reaction>
</comment>
<comment type="pathway">
    <text evidence="1">Pyrimidine metabolism; CTP biosynthesis via salvage pathway; CTP from cytidine: step 1/3.</text>
</comment>
<comment type="pathway">
    <text evidence="1">Pyrimidine metabolism; UMP biosynthesis via salvage pathway; UMP from uridine: step 1/1.</text>
</comment>
<comment type="subcellular location">
    <subcellularLocation>
        <location evidence="1">Cytoplasm</location>
    </subcellularLocation>
</comment>
<comment type="similarity">
    <text evidence="1">Belongs to the uridine kinase family.</text>
</comment>
<name>URK_LEUCK</name>
<evidence type="ECO:0000255" key="1">
    <source>
        <dbReference type="HAMAP-Rule" id="MF_00551"/>
    </source>
</evidence>
<reference key="1">
    <citation type="journal article" date="2008" name="J. Bacteriol.">
        <title>Complete genome sequence of Leuconostoc citreum KM20.</title>
        <authorList>
            <person name="Kim J.F."/>
            <person name="Jeong H."/>
            <person name="Lee J.-S."/>
            <person name="Choi S.-H."/>
            <person name="Ha M."/>
            <person name="Hur C.-G."/>
            <person name="Kim J.-S."/>
            <person name="Lee S."/>
            <person name="Park H.-S."/>
            <person name="Park Y.-H."/>
            <person name="Oh T.K."/>
        </authorList>
    </citation>
    <scope>NUCLEOTIDE SEQUENCE [LARGE SCALE GENOMIC DNA]</scope>
    <source>
        <strain>KM20</strain>
    </source>
</reference>
<feature type="chain" id="PRO_1000200515" description="Uridine kinase">
    <location>
        <begin position="1"/>
        <end position="210"/>
    </location>
</feature>
<feature type="binding site" evidence="1">
    <location>
        <begin position="12"/>
        <end position="19"/>
    </location>
    <ligand>
        <name>ATP</name>
        <dbReference type="ChEBI" id="CHEBI:30616"/>
    </ligand>
</feature>
<organism>
    <name type="scientific">Leuconostoc citreum (strain KM20)</name>
    <dbReference type="NCBI Taxonomy" id="349519"/>
    <lineage>
        <taxon>Bacteria</taxon>
        <taxon>Bacillati</taxon>
        <taxon>Bacillota</taxon>
        <taxon>Bacilli</taxon>
        <taxon>Lactobacillales</taxon>
        <taxon>Lactobacillaceae</taxon>
        <taxon>Leuconostoc</taxon>
    </lineage>
</organism>
<keyword id="KW-0067">ATP-binding</keyword>
<keyword id="KW-0963">Cytoplasm</keyword>
<keyword id="KW-0418">Kinase</keyword>
<keyword id="KW-0547">Nucleotide-binding</keyword>
<keyword id="KW-1185">Reference proteome</keyword>
<keyword id="KW-0808">Transferase</keyword>
<proteinExistence type="inferred from homology"/>
<gene>
    <name evidence="1" type="primary">udk</name>
    <name type="ordered locus">LCK_00460</name>
</gene>
<dbReference type="EC" id="2.7.1.48" evidence="1"/>
<dbReference type="EMBL" id="DQ489736">
    <property type="protein sequence ID" value="ACA82293.1"/>
    <property type="molecule type" value="Genomic_DNA"/>
</dbReference>
<dbReference type="RefSeq" id="WP_004903157.1">
    <property type="nucleotide sequence ID" value="NC_010471.1"/>
</dbReference>
<dbReference type="SMR" id="B1MXP1"/>
<dbReference type="STRING" id="349519.LCK_00460"/>
<dbReference type="GeneID" id="61102608"/>
<dbReference type="KEGG" id="lci:LCK_00460"/>
<dbReference type="eggNOG" id="COG0572">
    <property type="taxonomic scope" value="Bacteria"/>
</dbReference>
<dbReference type="HOGENOM" id="CLU_021278_1_2_9"/>
<dbReference type="OrthoDB" id="9777642at2"/>
<dbReference type="UniPathway" id="UPA00574">
    <property type="reaction ID" value="UER00637"/>
</dbReference>
<dbReference type="UniPathway" id="UPA00579">
    <property type="reaction ID" value="UER00640"/>
</dbReference>
<dbReference type="Proteomes" id="UP000002166">
    <property type="component" value="Chromosome"/>
</dbReference>
<dbReference type="GO" id="GO:0005737">
    <property type="term" value="C:cytoplasm"/>
    <property type="evidence" value="ECO:0007669"/>
    <property type="project" value="UniProtKB-SubCell"/>
</dbReference>
<dbReference type="GO" id="GO:0005524">
    <property type="term" value="F:ATP binding"/>
    <property type="evidence" value="ECO:0007669"/>
    <property type="project" value="UniProtKB-UniRule"/>
</dbReference>
<dbReference type="GO" id="GO:0016887">
    <property type="term" value="F:ATP hydrolysis activity"/>
    <property type="evidence" value="ECO:0007669"/>
    <property type="project" value="InterPro"/>
</dbReference>
<dbReference type="GO" id="GO:0043771">
    <property type="term" value="F:cytidine kinase activity"/>
    <property type="evidence" value="ECO:0007669"/>
    <property type="project" value="RHEA"/>
</dbReference>
<dbReference type="GO" id="GO:0004849">
    <property type="term" value="F:uridine kinase activity"/>
    <property type="evidence" value="ECO:0007669"/>
    <property type="project" value="UniProtKB-UniRule"/>
</dbReference>
<dbReference type="GO" id="GO:0044211">
    <property type="term" value="P:CTP salvage"/>
    <property type="evidence" value="ECO:0007669"/>
    <property type="project" value="UniProtKB-UniRule"/>
</dbReference>
<dbReference type="GO" id="GO:0044206">
    <property type="term" value="P:UMP salvage"/>
    <property type="evidence" value="ECO:0007669"/>
    <property type="project" value="UniProtKB-UniRule"/>
</dbReference>
<dbReference type="CDD" id="cd02023">
    <property type="entry name" value="UMPK"/>
    <property type="match status" value="1"/>
</dbReference>
<dbReference type="Gene3D" id="3.40.50.300">
    <property type="entry name" value="P-loop containing nucleotide triphosphate hydrolases"/>
    <property type="match status" value="1"/>
</dbReference>
<dbReference type="HAMAP" id="MF_00551">
    <property type="entry name" value="Uridine_kinase"/>
    <property type="match status" value="1"/>
</dbReference>
<dbReference type="InterPro" id="IPR003593">
    <property type="entry name" value="AAA+_ATPase"/>
</dbReference>
<dbReference type="InterPro" id="IPR027417">
    <property type="entry name" value="P-loop_NTPase"/>
</dbReference>
<dbReference type="InterPro" id="IPR006083">
    <property type="entry name" value="PRK/URK"/>
</dbReference>
<dbReference type="InterPro" id="IPR026008">
    <property type="entry name" value="Uridine_kinase"/>
</dbReference>
<dbReference type="InterPro" id="IPR000764">
    <property type="entry name" value="Uridine_kinase-like"/>
</dbReference>
<dbReference type="NCBIfam" id="NF004018">
    <property type="entry name" value="PRK05480.1"/>
    <property type="match status" value="1"/>
</dbReference>
<dbReference type="NCBIfam" id="TIGR00235">
    <property type="entry name" value="udk"/>
    <property type="match status" value="1"/>
</dbReference>
<dbReference type="PANTHER" id="PTHR10285">
    <property type="entry name" value="URIDINE KINASE"/>
    <property type="match status" value="1"/>
</dbReference>
<dbReference type="Pfam" id="PF00485">
    <property type="entry name" value="PRK"/>
    <property type="match status" value="1"/>
</dbReference>
<dbReference type="PRINTS" id="PR00988">
    <property type="entry name" value="URIDINKINASE"/>
</dbReference>
<dbReference type="SMART" id="SM00382">
    <property type="entry name" value="AAA"/>
    <property type="match status" value="1"/>
</dbReference>
<dbReference type="SUPFAM" id="SSF52540">
    <property type="entry name" value="P-loop containing nucleoside triphosphate hydrolases"/>
    <property type="match status" value="1"/>
</dbReference>